<gene>
    <name evidence="1" type="primary">pqqB</name>
    <name type="ordered locus">KPN78578_17800</name>
    <name type="ORF">KPN_01810</name>
</gene>
<comment type="function">
    <text evidence="1">May be involved in the transport of PQQ or its precursor to the periplasm.</text>
</comment>
<comment type="pathway">
    <text evidence="1">Cofactor biosynthesis; pyrroloquinoline quinone biosynthesis.</text>
</comment>
<comment type="similarity">
    <text evidence="1">Belongs to the PqqB family.</text>
</comment>
<proteinExistence type="inferred from homology"/>
<accession>A6T9H0</accession>
<feature type="chain" id="PRO_1000061648" description="Coenzyme PQQ synthesis protein B">
    <location>
        <begin position="1"/>
        <end position="308"/>
    </location>
</feature>
<organism>
    <name type="scientific">Klebsiella pneumoniae subsp. pneumoniae (strain ATCC 700721 / MGH 78578)</name>
    <dbReference type="NCBI Taxonomy" id="272620"/>
    <lineage>
        <taxon>Bacteria</taxon>
        <taxon>Pseudomonadati</taxon>
        <taxon>Pseudomonadota</taxon>
        <taxon>Gammaproteobacteria</taxon>
        <taxon>Enterobacterales</taxon>
        <taxon>Enterobacteriaceae</taxon>
        <taxon>Klebsiella/Raoultella group</taxon>
        <taxon>Klebsiella</taxon>
        <taxon>Klebsiella pneumoniae complex</taxon>
    </lineage>
</organism>
<name>PQQB_KLEP7</name>
<evidence type="ECO:0000255" key="1">
    <source>
        <dbReference type="HAMAP-Rule" id="MF_00653"/>
    </source>
</evidence>
<protein>
    <recommendedName>
        <fullName evidence="1">Coenzyme PQQ synthesis protein B</fullName>
    </recommendedName>
    <alternativeName>
        <fullName evidence="1">Pyrroloquinoline quinone biosynthesis protein B</fullName>
    </alternativeName>
</protein>
<sequence>MFIKVLGSAAGGGFPQWNCNCANCQGLRDGTIQAAPRTQSSIIVSDNGKEWVLCNASPDISQQIAHTPELNKAGVLRGTHIGGIILTDSQIDHTTGLLSLREGCPHQVWCTPEVHEDLSTGFPVFTMLRHWNGGLVHHPIAPQQPFTVDACPDLQFTAVPIASNAPPYSPYRDRPLPGHNVALFIENRRNGQTLFYAPGLGEPDEALLPWLQKADCLLIDGTVWQDDELQAAGVGRNTGRDMGHLALGDEHGMMALLASLPAKRKILIHINNTNPILNEQSPQRQALTQQGIEVSWDGMAITLQDTAC</sequence>
<dbReference type="EMBL" id="CP000647">
    <property type="protein sequence ID" value="ABR77241.1"/>
    <property type="molecule type" value="Genomic_DNA"/>
</dbReference>
<dbReference type="RefSeq" id="WP_004143684.1">
    <property type="nucleotide sequence ID" value="NC_009648.1"/>
</dbReference>
<dbReference type="SMR" id="A6T9H0"/>
<dbReference type="STRING" id="272620.KPN_01810"/>
<dbReference type="jPOST" id="A6T9H0"/>
<dbReference type="PaxDb" id="272620-KPN_01810"/>
<dbReference type="EnsemblBacteria" id="ABR77241">
    <property type="protein sequence ID" value="ABR77241"/>
    <property type="gene ID" value="KPN_01810"/>
</dbReference>
<dbReference type="KEGG" id="kpn:KPN_01810"/>
<dbReference type="HOGENOM" id="CLU_061120_0_0_6"/>
<dbReference type="UniPathway" id="UPA00539"/>
<dbReference type="Proteomes" id="UP000000265">
    <property type="component" value="Chromosome"/>
</dbReference>
<dbReference type="GO" id="GO:0018189">
    <property type="term" value="P:pyrroloquinoline quinone biosynthetic process"/>
    <property type="evidence" value="ECO:0007669"/>
    <property type="project" value="UniProtKB-UniRule"/>
</dbReference>
<dbReference type="CDD" id="cd16274">
    <property type="entry name" value="PQQB-like_MBL-fold"/>
    <property type="match status" value="1"/>
</dbReference>
<dbReference type="Gene3D" id="3.60.15.10">
    <property type="entry name" value="Ribonuclease Z/Hydroxyacylglutathione hydrolase-like"/>
    <property type="match status" value="1"/>
</dbReference>
<dbReference type="HAMAP" id="MF_00653">
    <property type="entry name" value="PQQ_syn_PqqB"/>
    <property type="match status" value="1"/>
</dbReference>
<dbReference type="InterPro" id="IPR001279">
    <property type="entry name" value="Metallo-B-lactamas"/>
</dbReference>
<dbReference type="InterPro" id="IPR011842">
    <property type="entry name" value="PQQ_synth_PqqB"/>
</dbReference>
<dbReference type="InterPro" id="IPR036866">
    <property type="entry name" value="RibonucZ/Hydroxyglut_hydro"/>
</dbReference>
<dbReference type="NCBIfam" id="TIGR02108">
    <property type="entry name" value="PQQ_syn_pqqB"/>
    <property type="match status" value="1"/>
</dbReference>
<dbReference type="PANTHER" id="PTHR42663:SF7">
    <property type="entry name" value="COENZYME PQQ SYNTHESIS PROTEIN B"/>
    <property type="match status" value="1"/>
</dbReference>
<dbReference type="PANTHER" id="PTHR42663">
    <property type="entry name" value="HYDROLASE C777.06C-RELATED-RELATED"/>
    <property type="match status" value="1"/>
</dbReference>
<dbReference type="Pfam" id="PF12706">
    <property type="entry name" value="Lactamase_B_2"/>
    <property type="match status" value="1"/>
</dbReference>
<dbReference type="SUPFAM" id="SSF56281">
    <property type="entry name" value="Metallo-hydrolase/oxidoreductase"/>
    <property type="match status" value="1"/>
</dbReference>
<keyword id="KW-0884">PQQ biosynthesis</keyword>
<keyword id="KW-0813">Transport</keyword>
<reference key="1">
    <citation type="submission" date="2006-09" db="EMBL/GenBank/DDBJ databases">
        <authorList>
            <consortium name="The Klebsiella pneumonia Genome Sequencing Project"/>
            <person name="McClelland M."/>
            <person name="Sanderson E.K."/>
            <person name="Spieth J."/>
            <person name="Clifton W.S."/>
            <person name="Latreille P."/>
            <person name="Sabo A."/>
            <person name="Pepin K."/>
            <person name="Bhonagiri V."/>
            <person name="Porwollik S."/>
            <person name="Ali J."/>
            <person name="Wilson R.K."/>
        </authorList>
    </citation>
    <scope>NUCLEOTIDE SEQUENCE [LARGE SCALE GENOMIC DNA]</scope>
    <source>
        <strain>ATCC 700721 / MGH 78578</strain>
    </source>
</reference>